<organism evidence="8">
    <name type="scientific">Vicia faba</name>
    <name type="common">Broad bean</name>
    <name type="synonym">Faba vulgaris</name>
    <dbReference type="NCBI Taxonomy" id="3906"/>
    <lineage>
        <taxon>Eukaryota</taxon>
        <taxon>Viridiplantae</taxon>
        <taxon>Streptophyta</taxon>
        <taxon>Embryophyta</taxon>
        <taxon>Tracheophyta</taxon>
        <taxon>Spermatophyta</taxon>
        <taxon>Magnoliopsida</taxon>
        <taxon>eudicotyledons</taxon>
        <taxon>Gunneridae</taxon>
        <taxon>Pentapetalae</taxon>
        <taxon>rosids</taxon>
        <taxon>fabids</taxon>
        <taxon>Fabales</taxon>
        <taxon>Fabaceae</taxon>
        <taxon>Papilionoideae</taxon>
        <taxon>50 kb inversion clade</taxon>
        <taxon>NPAAA clade</taxon>
        <taxon>Hologalegina</taxon>
        <taxon>IRL clade</taxon>
        <taxon>Fabeae</taxon>
        <taxon>Vicia</taxon>
    </lineage>
</organism>
<keyword id="KW-0333">Golgi apparatus</keyword>
<keyword id="KW-0732">Signal</keyword>
<sequence length="268" mass="29766">MEFAHLTVLSLFCLAFVGITATSSGEDYWQSIWPNTPLPKTFSDLLIPSGITNSLPIKSEELKQYSTLFFEHDLHPGKNFNLGHTNSVGSIIRPFTKSRQGVTDSIWLANKEKQSLEDFCYSPTAIAEHKHCVSSLKSMIDQVISHFGSTKIKAISSNFAPYQDQYVVEDVKKVGDNAVMCHRLNFEKVVFNCHQVRDTTAYVVSLVASDGTKTKALTVCHHDTRGMNPELLYEALEVTPGTVPVCHFIGNKAAAWVPNHTADNLCVM</sequence>
<dbReference type="EMBL" id="X56240">
    <property type="protein sequence ID" value="CAA39696.1"/>
    <property type="molecule type" value="Genomic_DNA"/>
</dbReference>
<dbReference type="PIR" id="S14068">
    <property type="entry name" value="S14068"/>
</dbReference>
<dbReference type="SMR" id="Q43675"/>
<dbReference type="GO" id="GO:0005795">
    <property type="term" value="C:Golgi stack"/>
    <property type="evidence" value="ECO:0007669"/>
    <property type="project" value="UniProtKB-SubCell"/>
</dbReference>
<dbReference type="InterPro" id="IPR044816">
    <property type="entry name" value="BURP"/>
</dbReference>
<dbReference type="InterPro" id="IPR004873">
    <property type="entry name" value="BURP_dom"/>
</dbReference>
<dbReference type="PANTHER" id="PTHR31236:SF35">
    <property type="entry name" value="ABUNDANT PROTEIN, PUTATIVE-RELATED"/>
    <property type="match status" value="1"/>
</dbReference>
<dbReference type="PANTHER" id="PTHR31236">
    <property type="entry name" value="BURP DOMAIN PROTEIN USPL1-LIKE"/>
    <property type="match status" value="1"/>
</dbReference>
<dbReference type="Pfam" id="PF03181">
    <property type="entry name" value="BURP"/>
    <property type="match status" value="1"/>
</dbReference>
<dbReference type="SMART" id="SM01045">
    <property type="entry name" value="BURP"/>
    <property type="match status" value="1"/>
</dbReference>
<dbReference type="PROSITE" id="PS51277">
    <property type="entry name" value="BURP"/>
    <property type="match status" value="1"/>
</dbReference>
<gene>
    <name evidence="6" type="primary">USP</name>
</gene>
<protein>
    <recommendedName>
        <fullName evidence="6">Unknown seed protein USP</fullName>
        <shortName evidence="6">VfUSP</shortName>
    </recommendedName>
</protein>
<comment type="function">
    <text evidence="3">Associated with the protein storage vacuole formation.</text>
</comment>
<comment type="subcellular location">
    <subcellularLocation>
        <location evidence="3">Golgi apparatus</location>
        <location evidence="3">Golgi stack</location>
    </subcellularLocation>
    <subcellularLocation>
        <location evidence="3">Prevacuolar compartment</location>
    </subcellularLocation>
</comment>
<comment type="tissue specificity">
    <text evidence="3 4">Expressed in seeds (PubMed:19639386, PubMed:2017140). Detected only in the embryo (PubMed:2017140). In germinating seedlings, detected in roots, root caps, root hairs, vascular bundle, mesophyll cells and epidermal cells of the cotyledons and the hypocotyl (PubMed:2017140).</text>
</comment>
<comment type="domain">
    <text evidence="5">The BURP domain located at the C-terminus has not been identified in non-plant proteins.</text>
</comment>
<comment type="miscellaneous">
    <text evidence="7">Most abundant mRNA species from cotyledons at early stages of development, but the encoded protein does not accumulate in cotyledons.</text>
</comment>
<comment type="miscellaneous">
    <text evidence="4">The USP gene family consists of roughly 10 to 20 members.</text>
</comment>
<name>USP_VICFA</name>
<evidence type="ECO:0000255" key="1"/>
<evidence type="ECO:0000255" key="2">
    <source>
        <dbReference type="PROSITE-ProRule" id="PRU00604"/>
    </source>
</evidence>
<evidence type="ECO:0000269" key="3">
    <source>
    </source>
</evidence>
<evidence type="ECO:0000269" key="4">
    <source>
    </source>
</evidence>
<evidence type="ECO:0000269" key="5">
    <source>
    </source>
</evidence>
<evidence type="ECO:0000303" key="6">
    <source>
    </source>
</evidence>
<evidence type="ECO:0000305" key="7">
    <source>
    </source>
</evidence>
<evidence type="ECO:0000312" key="8">
    <source>
        <dbReference type="EMBL" id="CAA39696.1"/>
    </source>
</evidence>
<feature type="signal peptide" evidence="1">
    <location>
        <begin position="1"/>
        <end position="25"/>
    </location>
</feature>
<feature type="chain" id="PRO_5004231912" description="Unknown seed protein USP">
    <location>
        <begin position="26"/>
        <end position="268"/>
    </location>
</feature>
<feature type="domain" description="BURP" evidence="2">
    <location>
        <begin position="68"/>
        <end position="259"/>
    </location>
</feature>
<reference key="1">
    <citation type="journal article" date="1991" name="Mol. Gen. Genet.">
        <title>A novel seed protein gene from Vicia faba is developmentally regulated in transgenic tobacco and Arabidopsis plants.</title>
        <authorList>
            <person name="Baumlein H."/>
            <person name="Boerjan W."/>
            <person name="Nagy I."/>
            <person name="Bassuner R."/>
            <person name="Van Montagu M."/>
            <person name="Inze D."/>
            <person name="Wobus U."/>
        </authorList>
    </citation>
    <scope>NUCLEOTIDE SEQUENCE [GENOMIC DNA]</scope>
    <scope>TISSUE SPECIFICITY</scope>
    <scope>GENE FAMILY</scope>
    <source>
        <strain>cv. Fribo</strain>
        <tissue>Leaf</tissue>
    </source>
</reference>
<reference key="2">
    <citation type="journal article" date="1988" name="Plant Mol. Biol.">
        <title>Abundant embryonic mRNA in field bean (Vicia faba L.) codes for a new class of seed proteins: cDNA cloning and characterization of the primary translation product.</title>
        <authorList>
            <person name="Bassuener R."/>
            <person name="Baeumlein H."/>
            <person name="Huth A."/>
            <person name="Jung R."/>
            <person name="Wobus U."/>
            <person name="Rapoport T.A."/>
            <person name="Saalbach G."/>
            <person name="Muentz K."/>
        </authorList>
        <dbReference type="AGRICOLA" id="IND92000056"/>
    </citation>
    <scope>GENE FAMILY</scope>
</reference>
<reference key="3">
    <citation type="journal article" date="1998" name="Mol. Gen. Genet.">
        <title>A conserved BURP domain defines a novel group of plant proteins with unusual primary structures.</title>
        <authorList>
            <person name="Hattori J."/>
            <person name="Boutilier K.A."/>
            <person name="van Lookeren Campagne M.M."/>
            <person name="Miki B.L."/>
        </authorList>
    </citation>
    <scope>DOMAIN</scope>
</reference>
<reference key="4">
    <citation type="journal article" date="2009" name="Plant Mol. Biol.">
        <title>The BURP domain protein AtUSPL1 of Arabidopsis thaliana is destined to the protein storage vacuoles and overexpression of the cognate gene distorts seed development.</title>
        <authorList>
            <person name="Van Son L."/>
            <person name="Tiedemann J."/>
            <person name="Rutten T."/>
            <person name="Hillmer S."/>
            <person name="Hinz G."/>
            <person name="Zank T."/>
            <person name="Manteuffel R."/>
            <person name="Baeumlein H."/>
        </authorList>
    </citation>
    <scope>FUNCTION</scope>
    <scope>SUBCELLULAR LOCATION</scope>
    <scope>TISSUE SPECIFICITY</scope>
</reference>
<proteinExistence type="evidence at transcript level"/>
<accession>Q43675</accession>